<proteinExistence type="inferred from homology"/>
<evidence type="ECO:0000250" key="1"/>
<evidence type="ECO:0000305" key="2"/>
<dbReference type="EMBL" id="BA000023">
    <property type="protein sequence ID" value="BAB65952.1"/>
    <property type="molecule type" value="Genomic_DNA"/>
</dbReference>
<dbReference type="RefSeq" id="WP_010978934.1">
    <property type="nucleotide sequence ID" value="NC_003106.2"/>
</dbReference>
<dbReference type="SMR" id="Q973G1"/>
<dbReference type="STRING" id="273063.STK_09405"/>
<dbReference type="GeneID" id="1458903"/>
<dbReference type="KEGG" id="sto:STK_09405"/>
<dbReference type="PATRIC" id="fig|273063.9.peg.1050"/>
<dbReference type="eggNOG" id="arCOG00906">
    <property type="taxonomic scope" value="Archaea"/>
</dbReference>
<dbReference type="Proteomes" id="UP000001015">
    <property type="component" value="Chromosome"/>
</dbReference>
<dbReference type="GO" id="GO:1990904">
    <property type="term" value="C:ribonucleoprotein complex"/>
    <property type="evidence" value="ECO:0007669"/>
    <property type="project" value="UniProtKB-KW"/>
</dbReference>
<dbReference type="GO" id="GO:0030515">
    <property type="term" value="F:snoRNA binding"/>
    <property type="evidence" value="ECO:0007669"/>
    <property type="project" value="InterPro"/>
</dbReference>
<dbReference type="GO" id="GO:0001522">
    <property type="term" value="P:pseudouridine synthesis"/>
    <property type="evidence" value="ECO:0007669"/>
    <property type="project" value="InterPro"/>
</dbReference>
<dbReference type="GO" id="GO:0006364">
    <property type="term" value="P:rRNA processing"/>
    <property type="evidence" value="ECO:0007669"/>
    <property type="project" value="UniProtKB-UniRule"/>
</dbReference>
<dbReference type="Gene3D" id="2.20.28.40">
    <property type="entry name" value="H/ACA ribonucleoprotein complex, subunit Nop10"/>
    <property type="match status" value="1"/>
</dbReference>
<dbReference type="HAMAP" id="MF_00803">
    <property type="entry name" value="Nop10"/>
    <property type="match status" value="1"/>
</dbReference>
<dbReference type="InterPro" id="IPR007264">
    <property type="entry name" value="H/ACA_rnp_Nop10"/>
</dbReference>
<dbReference type="InterPro" id="IPR036756">
    <property type="entry name" value="H/ACA_rnp_Nop10_sf"/>
</dbReference>
<dbReference type="InterPro" id="IPR023532">
    <property type="entry name" value="Nop10_arc-typ"/>
</dbReference>
<dbReference type="NCBIfam" id="NF009623">
    <property type="entry name" value="PRK13130.1"/>
    <property type="match status" value="1"/>
</dbReference>
<dbReference type="PANTHER" id="PTHR13305:SF0">
    <property type="entry name" value="H_ACA RIBONUCLEOPROTEIN COMPLEX SUBUNIT 3"/>
    <property type="match status" value="1"/>
</dbReference>
<dbReference type="PANTHER" id="PTHR13305">
    <property type="entry name" value="RIBOSOME BIOGENESIS PROTEIN NOP10"/>
    <property type="match status" value="1"/>
</dbReference>
<dbReference type="Pfam" id="PF04135">
    <property type="entry name" value="Nop10p"/>
    <property type="match status" value="1"/>
</dbReference>
<dbReference type="SUPFAM" id="SSF144210">
    <property type="entry name" value="Nop10-like SnoRNP"/>
    <property type="match status" value="1"/>
</dbReference>
<comment type="function">
    <text evidence="1">Involved in ribosome biogenesis; more specifically in 18S rRNA pseudouridylation and in cleavage of pre-rRNA.</text>
</comment>
<comment type="similarity">
    <text evidence="2">Belongs to the NOP10 family.</text>
</comment>
<organism>
    <name type="scientific">Sulfurisphaera tokodaii (strain DSM 16993 / JCM 10545 / NBRC 100140 / 7)</name>
    <name type="common">Sulfolobus tokodaii</name>
    <dbReference type="NCBI Taxonomy" id="273063"/>
    <lineage>
        <taxon>Archaea</taxon>
        <taxon>Thermoproteota</taxon>
        <taxon>Thermoprotei</taxon>
        <taxon>Sulfolobales</taxon>
        <taxon>Sulfolobaceae</taxon>
        <taxon>Sulfurisphaera</taxon>
    </lineage>
</organism>
<feature type="chain" id="PRO_0000149027" description="Ribosome biogenesis protein Nop10">
    <location>
        <begin position="1"/>
        <end position="56"/>
    </location>
</feature>
<keyword id="KW-1185">Reference proteome</keyword>
<keyword id="KW-0687">Ribonucleoprotein</keyword>
<keyword id="KW-0690">Ribosome biogenesis</keyword>
<keyword id="KW-0698">rRNA processing</keyword>
<accession>Q973G1</accession>
<name>NOP10_SULTO</name>
<gene>
    <name type="primary">nop10</name>
    <name type="ordered locus">STK_09405</name>
    <name type="ORF">STS104</name>
</gene>
<protein>
    <recommendedName>
        <fullName>Ribosome biogenesis protein Nop10</fullName>
    </recommendedName>
</protein>
<sequence length="56" mass="6525">MKWKIKKCPKDCTYTLKDICPICGTPTIIPHPARFSPVDKYVKYRIEIKKGIKLNC</sequence>
<reference key="1">
    <citation type="journal article" date="2001" name="DNA Res.">
        <title>Complete genome sequence of an aerobic thermoacidophilic Crenarchaeon, Sulfolobus tokodaii strain7.</title>
        <authorList>
            <person name="Kawarabayasi Y."/>
            <person name="Hino Y."/>
            <person name="Horikawa H."/>
            <person name="Jin-no K."/>
            <person name="Takahashi M."/>
            <person name="Sekine M."/>
            <person name="Baba S."/>
            <person name="Ankai A."/>
            <person name="Kosugi H."/>
            <person name="Hosoyama A."/>
            <person name="Fukui S."/>
            <person name="Nagai Y."/>
            <person name="Nishijima K."/>
            <person name="Otsuka R."/>
            <person name="Nakazawa H."/>
            <person name="Takamiya M."/>
            <person name="Kato Y."/>
            <person name="Yoshizawa T."/>
            <person name="Tanaka T."/>
            <person name="Kudoh Y."/>
            <person name="Yamazaki J."/>
            <person name="Kushida N."/>
            <person name="Oguchi A."/>
            <person name="Aoki K."/>
            <person name="Masuda S."/>
            <person name="Yanagii M."/>
            <person name="Nishimura M."/>
            <person name="Yamagishi A."/>
            <person name="Oshima T."/>
            <person name="Kikuchi H."/>
        </authorList>
    </citation>
    <scope>NUCLEOTIDE SEQUENCE [LARGE SCALE GENOMIC DNA]</scope>
    <source>
        <strain>DSM 16993 / JCM 10545 / NBRC 100140 / 7</strain>
    </source>
</reference>